<organism>
    <name type="scientific">Staphylococcus epidermidis (strain ATCC 12228 / FDA PCI 1200)</name>
    <dbReference type="NCBI Taxonomy" id="176280"/>
    <lineage>
        <taxon>Bacteria</taxon>
        <taxon>Bacillati</taxon>
        <taxon>Bacillota</taxon>
        <taxon>Bacilli</taxon>
        <taxon>Bacillales</taxon>
        <taxon>Staphylococcaceae</taxon>
        <taxon>Staphylococcus</taxon>
    </lineage>
</organism>
<protein>
    <recommendedName>
        <fullName>Tetracycline resistance protein</fullName>
    </recommendedName>
</protein>
<comment type="function">
    <text>Resistance to tetracycline by an active tetracycline efflux. This is an energy-dependent process that decreases the accumulation of the antibiotic in whole cells. This protein functions as a metal-tetracycline/H(+) antiporter.</text>
</comment>
<comment type="subcellular location">
    <subcellularLocation>
        <location>Cell membrane</location>
        <topology>Multi-pass membrane protein</topology>
    </subcellularLocation>
</comment>
<comment type="similarity">
    <text evidence="2">Belongs to the major facilitator superfamily. TCR/Tet family.</text>
</comment>
<gene>
    <name type="primary">tet</name>
    <name type="ordered locus">SE_p101</name>
</gene>
<proteinExistence type="inferred from homology"/>
<dbReference type="EMBL" id="AE015930">
    <property type="protein sequence ID" value="AAO06148.1"/>
    <property type="molecule type" value="Genomic_DNA"/>
</dbReference>
<dbReference type="RefSeq" id="NP_863256.1">
    <property type="nucleotide sequence ID" value="NC_005008.1"/>
</dbReference>
<dbReference type="SMR" id="P62967"/>
<dbReference type="CARD" id="ARO:3000178">
    <property type="molecule name" value="tet(K)"/>
    <property type="mechanism identifier" value="ARO:0010000"/>
    <property type="mechanism name" value="antibiotic efflux"/>
</dbReference>
<dbReference type="KEGG" id="sep:SE_p101"/>
<dbReference type="PATRIC" id="fig|176280.10.peg.2431"/>
<dbReference type="HOGENOM" id="CLU_000960_3_0_9"/>
<dbReference type="OrthoDB" id="2403626at2"/>
<dbReference type="Proteomes" id="UP000001411">
    <property type="component" value="Plasmid pSE-12228-01"/>
</dbReference>
<dbReference type="GO" id="GO:0005886">
    <property type="term" value="C:plasma membrane"/>
    <property type="evidence" value="ECO:0007669"/>
    <property type="project" value="UniProtKB-SubCell"/>
</dbReference>
<dbReference type="GO" id="GO:0015297">
    <property type="term" value="F:antiporter activity"/>
    <property type="evidence" value="ECO:0007669"/>
    <property type="project" value="UniProtKB-KW"/>
</dbReference>
<dbReference type="GO" id="GO:1902600">
    <property type="term" value="P:proton transmembrane transport"/>
    <property type="evidence" value="ECO:0007669"/>
    <property type="project" value="UniProtKB-KW"/>
</dbReference>
<dbReference type="GO" id="GO:0046677">
    <property type="term" value="P:response to antibiotic"/>
    <property type="evidence" value="ECO:0007669"/>
    <property type="project" value="UniProtKB-KW"/>
</dbReference>
<dbReference type="CDD" id="cd17321">
    <property type="entry name" value="MFS_MMR_MDR_like"/>
    <property type="match status" value="1"/>
</dbReference>
<dbReference type="Gene3D" id="1.20.1250.20">
    <property type="entry name" value="MFS general substrate transporter like domains"/>
    <property type="match status" value="1"/>
</dbReference>
<dbReference type="Gene3D" id="1.20.1720.10">
    <property type="entry name" value="Multidrug resistance protein D"/>
    <property type="match status" value="1"/>
</dbReference>
<dbReference type="InterPro" id="IPR011701">
    <property type="entry name" value="MFS"/>
</dbReference>
<dbReference type="InterPro" id="IPR020846">
    <property type="entry name" value="MFS_dom"/>
</dbReference>
<dbReference type="InterPro" id="IPR036259">
    <property type="entry name" value="MFS_trans_sf"/>
</dbReference>
<dbReference type="NCBIfam" id="NF012183">
    <property type="entry name" value="tet_MFS_K"/>
    <property type="match status" value="1"/>
</dbReference>
<dbReference type="NCBIfam" id="NF012175">
    <property type="entry name" value="tet_MFS_L_K_45"/>
    <property type="match status" value="1"/>
</dbReference>
<dbReference type="PANTHER" id="PTHR23501">
    <property type="entry name" value="MAJOR FACILITATOR SUPERFAMILY"/>
    <property type="match status" value="1"/>
</dbReference>
<dbReference type="PANTHER" id="PTHR23501:SF188">
    <property type="entry name" value="TETRACYCLINE RESISTANCE PROTEIN"/>
    <property type="match status" value="1"/>
</dbReference>
<dbReference type="Pfam" id="PF07690">
    <property type="entry name" value="MFS_1"/>
    <property type="match status" value="1"/>
</dbReference>
<dbReference type="PRINTS" id="PR01036">
    <property type="entry name" value="TCRTETB"/>
</dbReference>
<dbReference type="SUPFAM" id="SSF103473">
    <property type="entry name" value="MFS general substrate transporter"/>
    <property type="match status" value="1"/>
</dbReference>
<dbReference type="PROSITE" id="PS50850">
    <property type="entry name" value="MFS"/>
    <property type="match status" value="1"/>
</dbReference>
<name>TCR_STAES</name>
<feature type="chain" id="PRO_0000173385" description="Tetracycline resistance protein">
    <location>
        <begin position="1"/>
        <end position="459"/>
    </location>
</feature>
<feature type="transmembrane region" description="Helical" evidence="1">
    <location>
        <begin position="12"/>
        <end position="34"/>
    </location>
</feature>
<feature type="transmembrane region" description="Helical" evidence="1">
    <location>
        <begin position="49"/>
        <end position="68"/>
    </location>
</feature>
<feature type="transmembrane region" description="Helical" evidence="1">
    <location>
        <begin position="81"/>
        <end position="100"/>
    </location>
</feature>
<feature type="transmembrane region" description="Helical" evidence="1">
    <location>
        <begin position="105"/>
        <end position="127"/>
    </location>
</feature>
<feature type="transmembrane region" description="Helical" evidence="1">
    <location>
        <begin position="140"/>
        <end position="162"/>
    </location>
</feature>
<feature type="transmembrane region" description="Helical" evidence="1">
    <location>
        <begin position="166"/>
        <end position="188"/>
    </location>
</feature>
<feature type="transmembrane region" description="Helical" evidence="1">
    <location>
        <begin position="201"/>
        <end position="218"/>
    </location>
</feature>
<feature type="transmembrane region" description="Helical" evidence="1">
    <location>
        <begin position="223"/>
        <end position="240"/>
    </location>
</feature>
<feature type="transmembrane region" description="Helical" evidence="1">
    <location>
        <begin position="261"/>
        <end position="283"/>
    </location>
</feature>
<feature type="transmembrane region" description="Helical" evidence="1">
    <location>
        <begin position="293"/>
        <end position="315"/>
    </location>
</feature>
<feature type="transmembrane region" description="Helical" evidence="1">
    <location>
        <begin position="322"/>
        <end position="344"/>
    </location>
</feature>
<feature type="transmembrane region" description="Helical" evidence="1">
    <location>
        <begin position="348"/>
        <end position="370"/>
    </location>
</feature>
<feature type="transmembrane region" description="Helical" evidence="1">
    <location>
        <begin position="391"/>
        <end position="413"/>
    </location>
</feature>
<feature type="transmembrane region" description="Helical" evidence="1">
    <location>
        <begin position="428"/>
        <end position="450"/>
    </location>
</feature>
<keyword id="KW-0046">Antibiotic resistance</keyword>
<keyword id="KW-0050">Antiport</keyword>
<keyword id="KW-1003">Cell membrane</keyword>
<keyword id="KW-0375">Hydrogen ion transport</keyword>
<keyword id="KW-0406">Ion transport</keyword>
<keyword id="KW-0472">Membrane</keyword>
<keyword id="KW-0614">Plasmid</keyword>
<keyword id="KW-0812">Transmembrane</keyword>
<keyword id="KW-1133">Transmembrane helix</keyword>
<keyword id="KW-0813">Transport</keyword>
<reference key="1">
    <citation type="journal article" date="2003" name="Mol. Microbiol.">
        <title>Genome-based analysis of virulence genes in a non-biofilm-forming Staphylococcus epidermidis strain (ATCC 12228).</title>
        <authorList>
            <person name="Zhang Y.-Q."/>
            <person name="Ren S.-X."/>
            <person name="Li H.-L."/>
            <person name="Wang Y.-X."/>
            <person name="Fu G."/>
            <person name="Yang J."/>
            <person name="Qin Z.-Q."/>
            <person name="Miao Y.-G."/>
            <person name="Wang W.-Y."/>
            <person name="Chen R.-S."/>
            <person name="Shen Y."/>
            <person name="Chen Z."/>
            <person name="Yuan Z.-H."/>
            <person name="Zhao G.-P."/>
            <person name="Qu D."/>
            <person name="Danchin A."/>
            <person name="Wen Y.-M."/>
        </authorList>
    </citation>
    <scope>NUCLEOTIDE SEQUENCE [LARGE SCALE GENOMIC DNA]</scope>
    <source>
        <strain>ATCC 12228 / FDA PCI 1200</strain>
    </source>
</reference>
<evidence type="ECO:0000255" key="1"/>
<evidence type="ECO:0000305" key="2"/>
<accession>P62967</accession>
<accession>P14512</accession>
<sequence length="459" mass="50695">MFSLYKKFKGLFYSVLFWLCILSFFSVLNEMVLNVSLPDIANHFNTTPGITNWVNTAYMLTFSIGTAVYGKLSDYINIKKLLIIGISLSCLGSLIAFIGHNHFFILIFGRLVQGVGSAAFPSLIMVVVARNITRKKQGKAFGFIGSIVALGEGLGPSIGGIIAHYIHWSYLLILPMITIVTIPFLIKVMVPGKSTKNTLDIVGIVLMSISIICFMLFTTNYNWTFLILFTIFFVIFIKHISRVSNPFINPKLGKNIPFMLGLFSGGLIFSIVAGFISMVPYMMKTIYHVNVATIGNSVIFPGTMSVIVFGYFGGFLVDRKGSLFVFILGSLSISISFLTIAFFVEFSMWLTTFMFIFVMGGLSFTKTVISKIVSSSLSEEEVASGMSLLNFTSFLSEGTGIAIVGGLLSLQLINRKLVLEFINYSSGVYSNILVAMAILIILCCLLTIIVFKRSEKQFE</sequence>
<geneLocation type="plasmid">
    <name>pSE-12228-01</name>
</geneLocation>